<accession>B0TTI2</accession>
<proteinExistence type="inferred from homology"/>
<reference key="1">
    <citation type="submission" date="2008-01" db="EMBL/GenBank/DDBJ databases">
        <title>Complete sequence of Shewanella halifaxensis HAW-EB4.</title>
        <authorList>
            <consortium name="US DOE Joint Genome Institute"/>
            <person name="Copeland A."/>
            <person name="Lucas S."/>
            <person name="Lapidus A."/>
            <person name="Glavina del Rio T."/>
            <person name="Dalin E."/>
            <person name="Tice H."/>
            <person name="Bruce D."/>
            <person name="Goodwin L."/>
            <person name="Pitluck S."/>
            <person name="Sims D."/>
            <person name="Brettin T."/>
            <person name="Detter J.C."/>
            <person name="Han C."/>
            <person name="Kuske C.R."/>
            <person name="Schmutz J."/>
            <person name="Larimer F."/>
            <person name="Land M."/>
            <person name="Hauser L."/>
            <person name="Kyrpides N."/>
            <person name="Kim E."/>
            <person name="Zhao J.-S."/>
            <person name="Richardson P."/>
        </authorList>
    </citation>
    <scope>NUCLEOTIDE SEQUENCE [LARGE SCALE GENOMIC DNA]</scope>
    <source>
        <strain>HAW-EB4</strain>
    </source>
</reference>
<name>PANB_SHEHH</name>
<sequence>MSKITSSTLRTFKQEGKKFTALTAYDASFASAFDSEGIDVLLVGDSMGMVLQGHSDTLPVTVDDIAYHTRCVRRGIEHSLLIADMPFMSYATPEQTMVNATTLMQAGASMVKVEGGHWLLESVAMLTERGIPVCAHLGLTPQSVHVFGGFKVQGRDADNAQRILDEAKALEAAGAQLLVVECIPASLAKAITQALTIPVIGIGAGKDTDGQILVMHDVLGISSGYIPRFSKNYLKQTGEIRAAVRAYIDEVAQGVFPGDEHTFN</sequence>
<feature type="chain" id="PRO_1000076831" description="3-methyl-2-oxobutanoate hydroxymethyltransferase">
    <location>
        <begin position="1"/>
        <end position="264"/>
    </location>
</feature>
<feature type="active site" description="Proton acceptor" evidence="1">
    <location>
        <position position="181"/>
    </location>
</feature>
<feature type="binding site" evidence="1">
    <location>
        <begin position="45"/>
        <end position="46"/>
    </location>
    <ligand>
        <name>3-methyl-2-oxobutanoate</name>
        <dbReference type="ChEBI" id="CHEBI:11851"/>
    </ligand>
</feature>
<feature type="binding site" evidence="1">
    <location>
        <position position="45"/>
    </location>
    <ligand>
        <name>Mg(2+)</name>
        <dbReference type="ChEBI" id="CHEBI:18420"/>
    </ligand>
</feature>
<feature type="binding site" evidence="1">
    <location>
        <position position="84"/>
    </location>
    <ligand>
        <name>3-methyl-2-oxobutanoate</name>
        <dbReference type="ChEBI" id="CHEBI:11851"/>
    </ligand>
</feature>
<feature type="binding site" evidence="1">
    <location>
        <position position="84"/>
    </location>
    <ligand>
        <name>Mg(2+)</name>
        <dbReference type="ChEBI" id="CHEBI:18420"/>
    </ligand>
</feature>
<feature type="binding site" evidence="1">
    <location>
        <position position="112"/>
    </location>
    <ligand>
        <name>3-methyl-2-oxobutanoate</name>
        <dbReference type="ChEBI" id="CHEBI:11851"/>
    </ligand>
</feature>
<feature type="binding site" evidence="1">
    <location>
        <position position="114"/>
    </location>
    <ligand>
        <name>Mg(2+)</name>
        <dbReference type="ChEBI" id="CHEBI:18420"/>
    </ligand>
</feature>
<gene>
    <name evidence="1" type="primary">panB</name>
    <name type="ordered locus">Shal_0750</name>
</gene>
<comment type="function">
    <text evidence="1">Catalyzes the reversible reaction in which hydroxymethyl group from 5,10-methylenetetrahydrofolate is transferred onto alpha-ketoisovalerate to form ketopantoate.</text>
</comment>
<comment type="catalytic activity">
    <reaction evidence="1">
        <text>3-methyl-2-oxobutanoate + (6R)-5,10-methylene-5,6,7,8-tetrahydrofolate + H2O = 2-dehydropantoate + (6S)-5,6,7,8-tetrahydrofolate</text>
        <dbReference type="Rhea" id="RHEA:11824"/>
        <dbReference type="ChEBI" id="CHEBI:11561"/>
        <dbReference type="ChEBI" id="CHEBI:11851"/>
        <dbReference type="ChEBI" id="CHEBI:15377"/>
        <dbReference type="ChEBI" id="CHEBI:15636"/>
        <dbReference type="ChEBI" id="CHEBI:57453"/>
        <dbReference type="EC" id="2.1.2.11"/>
    </reaction>
</comment>
<comment type="cofactor">
    <cofactor evidence="1">
        <name>Mg(2+)</name>
        <dbReference type="ChEBI" id="CHEBI:18420"/>
    </cofactor>
    <text evidence="1">Binds 1 Mg(2+) ion per subunit.</text>
</comment>
<comment type="pathway">
    <text evidence="1">Cofactor biosynthesis; (R)-pantothenate biosynthesis; (R)-pantoate from 3-methyl-2-oxobutanoate: step 1/2.</text>
</comment>
<comment type="subunit">
    <text evidence="1">Homodecamer; pentamer of dimers.</text>
</comment>
<comment type="subcellular location">
    <subcellularLocation>
        <location evidence="1">Cytoplasm</location>
    </subcellularLocation>
</comment>
<comment type="similarity">
    <text evidence="1">Belongs to the PanB family.</text>
</comment>
<protein>
    <recommendedName>
        <fullName evidence="1">3-methyl-2-oxobutanoate hydroxymethyltransferase</fullName>
        <ecNumber evidence="1">2.1.2.11</ecNumber>
    </recommendedName>
    <alternativeName>
        <fullName evidence="1">Ketopantoate hydroxymethyltransferase</fullName>
        <shortName evidence="1">KPHMT</shortName>
    </alternativeName>
</protein>
<evidence type="ECO:0000255" key="1">
    <source>
        <dbReference type="HAMAP-Rule" id="MF_00156"/>
    </source>
</evidence>
<organism>
    <name type="scientific">Shewanella halifaxensis (strain HAW-EB4)</name>
    <dbReference type="NCBI Taxonomy" id="458817"/>
    <lineage>
        <taxon>Bacteria</taxon>
        <taxon>Pseudomonadati</taxon>
        <taxon>Pseudomonadota</taxon>
        <taxon>Gammaproteobacteria</taxon>
        <taxon>Alteromonadales</taxon>
        <taxon>Shewanellaceae</taxon>
        <taxon>Shewanella</taxon>
    </lineage>
</organism>
<keyword id="KW-0963">Cytoplasm</keyword>
<keyword id="KW-0460">Magnesium</keyword>
<keyword id="KW-0479">Metal-binding</keyword>
<keyword id="KW-0566">Pantothenate biosynthesis</keyword>
<keyword id="KW-0808">Transferase</keyword>
<dbReference type="EC" id="2.1.2.11" evidence="1"/>
<dbReference type="EMBL" id="CP000931">
    <property type="protein sequence ID" value="ABZ75325.1"/>
    <property type="molecule type" value="Genomic_DNA"/>
</dbReference>
<dbReference type="RefSeq" id="WP_012275879.1">
    <property type="nucleotide sequence ID" value="NC_010334.1"/>
</dbReference>
<dbReference type="SMR" id="B0TTI2"/>
<dbReference type="STRING" id="458817.Shal_0750"/>
<dbReference type="KEGG" id="shl:Shal_0750"/>
<dbReference type="eggNOG" id="COG0413">
    <property type="taxonomic scope" value="Bacteria"/>
</dbReference>
<dbReference type="HOGENOM" id="CLU_036645_1_0_6"/>
<dbReference type="OrthoDB" id="9781789at2"/>
<dbReference type="UniPathway" id="UPA00028">
    <property type="reaction ID" value="UER00003"/>
</dbReference>
<dbReference type="Proteomes" id="UP000001317">
    <property type="component" value="Chromosome"/>
</dbReference>
<dbReference type="GO" id="GO:0005737">
    <property type="term" value="C:cytoplasm"/>
    <property type="evidence" value="ECO:0007669"/>
    <property type="project" value="UniProtKB-SubCell"/>
</dbReference>
<dbReference type="GO" id="GO:0003864">
    <property type="term" value="F:3-methyl-2-oxobutanoate hydroxymethyltransferase activity"/>
    <property type="evidence" value="ECO:0007669"/>
    <property type="project" value="UniProtKB-UniRule"/>
</dbReference>
<dbReference type="GO" id="GO:0000287">
    <property type="term" value="F:magnesium ion binding"/>
    <property type="evidence" value="ECO:0007669"/>
    <property type="project" value="TreeGrafter"/>
</dbReference>
<dbReference type="GO" id="GO:0015940">
    <property type="term" value="P:pantothenate biosynthetic process"/>
    <property type="evidence" value="ECO:0007669"/>
    <property type="project" value="UniProtKB-UniRule"/>
</dbReference>
<dbReference type="CDD" id="cd06557">
    <property type="entry name" value="KPHMT-like"/>
    <property type="match status" value="1"/>
</dbReference>
<dbReference type="FunFam" id="3.20.20.60:FF:000003">
    <property type="entry name" value="3-methyl-2-oxobutanoate hydroxymethyltransferase"/>
    <property type="match status" value="1"/>
</dbReference>
<dbReference type="Gene3D" id="3.20.20.60">
    <property type="entry name" value="Phosphoenolpyruvate-binding domains"/>
    <property type="match status" value="1"/>
</dbReference>
<dbReference type="HAMAP" id="MF_00156">
    <property type="entry name" value="PanB"/>
    <property type="match status" value="1"/>
</dbReference>
<dbReference type="InterPro" id="IPR003700">
    <property type="entry name" value="Pantoate_hydroxy_MeTrfase"/>
</dbReference>
<dbReference type="InterPro" id="IPR015813">
    <property type="entry name" value="Pyrv/PenolPyrv_kinase-like_dom"/>
</dbReference>
<dbReference type="InterPro" id="IPR040442">
    <property type="entry name" value="Pyrv_kinase-like_dom_sf"/>
</dbReference>
<dbReference type="NCBIfam" id="TIGR00222">
    <property type="entry name" value="panB"/>
    <property type="match status" value="1"/>
</dbReference>
<dbReference type="NCBIfam" id="NF001452">
    <property type="entry name" value="PRK00311.1"/>
    <property type="match status" value="1"/>
</dbReference>
<dbReference type="PANTHER" id="PTHR20881">
    <property type="entry name" value="3-METHYL-2-OXOBUTANOATE HYDROXYMETHYLTRANSFERASE"/>
    <property type="match status" value="1"/>
</dbReference>
<dbReference type="PANTHER" id="PTHR20881:SF0">
    <property type="entry name" value="3-METHYL-2-OXOBUTANOATE HYDROXYMETHYLTRANSFERASE"/>
    <property type="match status" value="1"/>
</dbReference>
<dbReference type="Pfam" id="PF02548">
    <property type="entry name" value="Pantoate_transf"/>
    <property type="match status" value="1"/>
</dbReference>
<dbReference type="PIRSF" id="PIRSF000388">
    <property type="entry name" value="Pantoate_hydroxy_MeTrfase"/>
    <property type="match status" value="1"/>
</dbReference>
<dbReference type="SUPFAM" id="SSF51621">
    <property type="entry name" value="Phosphoenolpyruvate/pyruvate domain"/>
    <property type="match status" value="1"/>
</dbReference>